<sequence>MAELKNDRYLRALLKQPVDMTPVWMMRQAGRYLPEYKATRAQAGDFMSLCKNHELACEVTLQPLRRYELDAAILFSDILTVPDAMGLGLYFEAGEGPRFERPTDTIDAIKKLSIPDPEDELGYVMKAVSTIRRELNGAVPLIGFSGSPWTLATYMVEGGSSKTFEKIKKMAYAEPAALHMLLDKLADSVILYLNAQVANGAQSLMIFDSWGGALSHTAYREFSLRYMQKIVDGLTRFADGRQVPVTLFTKGGGLWLEAMAETGCDALGLDWTVDIADARRRVGHKVALQGNMDPSMLYAPIPRIEEEVSQILAGYGEGTGHVFNLGHGIHQHVDPEHAGAFIKAVHAQSKQYHK</sequence>
<comment type="function">
    <text evidence="1">Catalyzes the decarboxylation of four acetate groups of uroporphyrinogen-III to yield coproporphyrinogen-III.</text>
</comment>
<comment type="catalytic activity">
    <reaction evidence="1">
        <text>uroporphyrinogen III + 4 H(+) = coproporphyrinogen III + 4 CO2</text>
        <dbReference type="Rhea" id="RHEA:19865"/>
        <dbReference type="ChEBI" id="CHEBI:15378"/>
        <dbReference type="ChEBI" id="CHEBI:16526"/>
        <dbReference type="ChEBI" id="CHEBI:57308"/>
        <dbReference type="ChEBI" id="CHEBI:57309"/>
        <dbReference type="EC" id="4.1.1.37"/>
    </reaction>
</comment>
<comment type="pathway">
    <text evidence="1">Porphyrin-containing compound metabolism; protoporphyrin-IX biosynthesis; coproporphyrinogen-III from 5-aminolevulinate: step 4/4.</text>
</comment>
<comment type="subunit">
    <text evidence="1">Homodimer.</text>
</comment>
<comment type="subcellular location">
    <subcellularLocation>
        <location evidence="1">Cytoplasm</location>
    </subcellularLocation>
</comment>
<comment type="similarity">
    <text evidence="1">Belongs to the uroporphyrinogen decarboxylase family.</text>
</comment>
<keyword id="KW-0963">Cytoplasm</keyword>
<keyword id="KW-0210">Decarboxylase</keyword>
<keyword id="KW-0456">Lyase</keyword>
<keyword id="KW-0627">Porphyrin biosynthesis</keyword>
<accession>A4YAY4</accession>
<dbReference type="EC" id="4.1.1.37" evidence="1"/>
<dbReference type="EMBL" id="CP000681">
    <property type="protein sequence ID" value="ABP77117.1"/>
    <property type="molecule type" value="Genomic_DNA"/>
</dbReference>
<dbReference type="SMR" id="A4YAY4"/>
<dbReference type="STRING" id="319224.Sputcn32_3406"/>
<dbReference type="KEGG" id="spc:Sputcn32_3406"/>
<dbReference type="eggNOG" id="COG0407">
    <property type="taxonomic scope" value="Bacteria"/>
</dbReference>
<dbReference type="HOGENOM" id="CLU_040933_0_0_6"/>
<dbReference type="UniPathway" id="UPA00251">
    <property type="reaction ID" value="UER00321"/>
</dbReference>
<dbReference type="GO" id="GO:0005829">
    <property type="term" value="C:cytosol"/>
    <property type="evidence" value="ECO:0007669"/>
    <property type="project" value="TreeGrafter"/>
</dbReference>
<dbReference type="GO" id="GO:0004853">
    <property type="term" value="F:uroporphyrinogen decarboxylase activity"/>
    <property type="evidence" value="ECO:0007669"/>
    <property type="project" value="UniProtKB-UniRule"/>
</dbReference>
<dbReference type="GO" id="GO:0019353">
    <property type="term" value="P:protoporphyrinogen IX biosynthetic process from glutamate"/>
    <property type="evidence" value="ECO:0007669"/>
    <property type="project" value="TreeGrafter"/>
</dbReference>
<dbReference type="CDD" id="cd00717">
    <property type="entry name" value="URO-D"/>
    <property type="match status" value="1"/>
</dbReference>
<dbReference type="FunFam" id="3.20.20.210:FF:000001">
    <property type="entry name" value="Uroporphyrinogen decarboxylase"/>
    <property type="match status" value="1"/>
</dbReference>
<dbReference type="Gene3D" id="3.20.20.210">
    <property type="match status" value="1"/>
</dbReference>
<dbReference type="HAMAP" id="MF_00218">
    <property type="entry name" value="URO_D"/>
    <property type="match status" value="1"/>
</dbReference>
<dbReference type="InterPro" id="IPR038071">
    <property type="entry name" value="UROD/MetE-like_sf"/>
</dbReference>
<dbReference type="InterPro" id="IPR006361">
    <property type="entry name" value="Uroporphyrinogen_deCO2ase_HemE"/>
</dbReference>
<dbReference type="InterPro" id="IPR000257">
    <property type="entry name" value="Uroporphyrinogen_deCOase"/>
</dbReference>
<dbReference type="NCBIfam" id="TIGR01464">
    <property type="entry name" value="hemE"/>
    <property type="match status" value="1"/>
</dbReference>
<dbReference type="PANTHER" id="PTHR21091">
    <property type="entry name" value="METHYLTETRAHYDROFOLATE:HOMOCYSTEINE METHYLTRANSFERASE RELATED"/>
    <property type="match status" value="1"/>
</dbReference>
<dbReference type="PANTHER" id="PTHR21091:SF169">
    <property type="entry name" value="UROPORPHYRINOGEN DECARBOXYLASE"/>
    <property type="match status" value="1"/>
</dbReference>
<dbReference type="Pfam" id="PF01208">
    <property type="entry name" value="URO-D"/>
    <property type="match status" value="1"/>
</dbReference>
<dbReference type="SUPFAM" id="SSF51726">
    <property type="entry name" value="UROD/MetE-like"/>
    <property type="match status" value="1"/>
</dbReference>
<dbReference type="PROSITE" id="PS00906">
    <property type="entry name" value="UROD_1"/>
    <property type="match status" value="1"/>
</dbReference>
<dbReference type="PROSITE" id="PS00907">
    <property type="entry name" value="UROD_2"/>
    <property type="match status" value="1"/>
</dbReference>
<gene>
    <name evidence="1" type="primary">hemE</name>
    <name type="ordered locus">Sputcn32_3406</name>
</gene>
<feature type="chain" id="PRO_1000023972" description="Uroporphyrinogen decarboxylase">
    <location>
        <begin position="1"/>
        <end position="354"/>
    </location>
</feature>
<feature type="binding site" evidence="1">
    <location>
        <begin position="27"/>
        <end position="31"/>
    </location>
    <ligand>
        <name>substrate</name>
    </ligand>
</feature>
<feature type="binding site" evidence="1">
    <location>
        <position position="77"/>
    </location>
    <ligand>
        <name>substrate</name>
    </ligand>
</feature>
<feature type="binding site" evidence="1">
    <location>
        <position position="154"/>
    </location>
    <ligand>
        <name>substrate</name>
    </ligand>
</feature>
<feature type="binding site" evidence="1">
    <location>
        <position position="209"/>
    </location>
    <ligand>
        <name>substrate</name>
    </ligand>
</feature>
<feature type="binding site" evidence="1">
    <location>
        <position position="327"/>
    </location>
    <ligand>
        <name>substrate</name>
    </ligand>
</feature>
<feature type="site" description="Transition state stabilizer" evidence="1">
    <location>
        <position position="77"/>
    </location>
</feature>
<protein>
    <recommendedName>
        <fullName evidence="1">Uroporphyrinogen decarboxylase</fullName>
        <shortName evidence="1">UPD</shortName>
        <shortName evidence="1">URO-D</shortName>
        <ecNumber evidence="1">4.1.1.37</ecNumber>
    </recommendedName>
</protein>
<organism>
    <name type="scientific">Shewanella putrefaciens (strain CN-32 / ATCC BAA-453)</name>
    <dbReference type="NCBI Taxonomy" id="319224"/>
    <lineage>
        <taxon>Bacteria</taxon>
        <taxon>Pseudomonadati</taxon>
        <taxon>Pseudomonadota</taxon>
        <taxon>Gammaproteobacteria</taxon>
        <taxon>Alteromonadales</taxon>
        <taxon>Shewanellaceae</taxon>
        <taxon>Shewanella</taxon>
    </lineage>
</organism>
<proteinExistence type="inferred from homology"/>
<evidence type="ECO:0000255" key="1">
    <source>
        <dbReference type="HAMAP-Rule" id="MF_00218"/>
    </source>
</evidence>
<reference key="1">
    <citation type="submission" date="2007-04" db="EMBL/GenBank/DDBJ databases">
        <title>Complete sequence of Shewanella putrefaciens CN-32.</title>
        <authorList>
            <consortium name="US DOE Joint Genome Institute"/>
            <person name="Copeland A."/>
            <person name="Lucas S."/>
            <person name="Lapidus A."/>
            <person name="Barry K."/>
            <person name="Detter J.C."/>
            <person name="Glavina del Rio T."/>
            <person name="Hammon N."/>
            <person name="Israni S."/>
            <person name="Dalin E."/>
            <person name="Tice H."/>
            <person name="Pitluck S."/>
            <person name="Chain P."/>
            <person name="Malfatti S."/>
            <person name="Shin M."/>
            <person name="Vergez L."/>
            <person name="Schmutz J."/>
            <person name="Larimer F."/>
            <person name="Land M."/>
            <person name="Hauser L."/>
            <person name="Kyrpides N."/>
            <person name="Mikhailova N."/>
            <person name="Romine M.F."/>
            <person name="Fredrickson J."/>
            <person name="Tiedje J."/>
            <person name="Richardson P."/>
        </authorList>
    </citation>
    <scope>NUCLEOTIDE SEQUENCE [LARGE SCALE GENOMIC DNA]</scope>
    <source>
        <strain>CN-32 / ATCC BAA-453</strain>
    </source>
</reference>
<name>DCUP_SHEPC</name>